<dbReference type="EC" id="2.7.6.1" evidence="1"/>
<dbReference type="EMBL" id="AY135437">
    <property type="protein sequence ID" value="AAN10325.1"/>
    <property type="molecule type" value="Genomic_DNA"/>
</dbReference>
<dbReference type="EMBL" id="AY135438">
    <property type="protein sequence ID" value="AAN10326.1"/>
    <property type="molecule type" value="Genomic_DNA"/>
</dbReference>
<dbReference type="RefSeq" id="WP_014091731.1">
    <property type="nucleotide sequence ID" value="NZ_RBYJ01000016.1"/>
</dbReference>
<dbReference type="SMR" id="Q83YI7"/>
<dbReference type="OMA" id="YFGWARQ"/>
<dbReference type="UniPathway" id="UPA00087">
    <property type="reaction ID" value="UER00172"/>
</dbReference>
<dbReference type="GO" id="GO:0005737">
    <property type="term" value="C:cytoplasm"/>
    <property type="evidence" value="ECO:0007669"/>
    <property type="project" value="UniProtKB-SubCell"/>
</dbReference>
<dbReference type="GO" id="GO:0002189">
    <property type="term" value="C:ribose phosphate diphosphokinase complex"/>
    <property type="evidence" value="ECO:0007669"/>
    <property type="project" value="TreeGrafter"/>
</dbReference>
<dbReference type="GO" id="GO:0005524">
    <property type="term" value="F:ATP binding"/>
    <property type="evidence" value="ECO:0007669"/>
    <property type="project" value="UniProtKB-KW"/>
</dbReference>
<dbReference type="GO" id="GO:0016301">
    <property type="term" value="F:kinase activity"/>
    <property type="evidence" value="ECO:0007669"/>
    <property type="project" value="UniProtKB-KW"/>
</dbReference>
<dbReference type="GO" id="GO:0000287">
    <property type="term" value="F:magnesium ion binding"/>
    <property type="evidence" value="ECO:0007669"/>
    <property type="project" value="UniProtKB-UniRule"/>
</dbReference>
<dbReference type="GO" id="GO:0004749">
    <property type="term" value="F:ribose phosphate diphosphokinase activity"/>
    <property type="evidence" value="ECO:0007669"/>
    <property type="project" value="UniProtKB-UniRule"/>
</dbReference>
<dbReference type="GO" id="GO:0006015">
    <property type="term" value="P:5-phosphoribose 1-diphosphate biosynthetic process"/>
    <property type="evidence" value="ECO:0007669"/>
    <property type="project" value="UniProtKB-UniRule"/>
</dbReference>
<dbReference type="GO" id="GO:0006164">
    <property type="term" value="P:purine nucleotide biosynthetic process"/>
    <property type="evidence" value="ECO:0007669"/>
    <property type="project" value="TreeGrafter"/>
</dbReference>
<dbReference type="GO" id="GO:0009156">
    <property type="term" value="P:ribonucleoside monophosphate biosynthetic process"/>
    <property type="evidence" value="ECO:0007669"/>
    <property type="project" value="InterPro"/>
</dbReference>
<dbReference type="CDD" id="cd06223">
    <property type="entry name" value="PRTases_typeI"/>
    <property type="match status" value="1"/>
</dbReference>
<dbReference type="FunFam" id="3.40.50.2020:FF:000001">
    <property type="entry name" value="Ribose-phosphate pyrophosphokinase"/>
    <property type="match status" value="1"/>
</dbReference>
<dbReference type="FunFam" id="3.40.50.2020:FF:000005">
    <property type="entry name" value="Ribose-phosphate pyrophosphokinase 1"/>
    <property type="match status" value="1"/>
</dbReference>
<dbReference type="Gene3D" id="3.40.50.2020">
    <property type="match status" value="2"/>
</dbReference>
<dbReference type="HAMAP" id="MF_00583_B">
    <property type="entry name" value="RibP_PPkinase_B"/>
    <property type="match status" value="1"/>
</dbReference>
<dbReference type="InterPro" id="IPR000842">
    <property type="entry name" value="PRib_PP_synth_CS"/>
</dbReference>
<dbReference type="InterPro" id="IPR029099">
    <property type="entry name" value="Pribosyltran_N"/>
</dbReference>
<dbReference type="InterPro" id="IPR000836">
    <property type="entry name" value="PRibTrfase_dom"/>
</dbReference>
<dbReference type="InterPro" id="IPR029057">
    <property type="entry name" value="PRTase-like"/>
</dbReference>
<dbReference type="InterPro" id="IPR005946">
    <property type="entry name" value="Rib-P_diPkinase"/>
</dbReference>
<dbReference type="InterPro" id="IPR037515">
    <property type="entry name" value="Rib-P_diPkinase_bac"/>
</dbReference>
<dbReference type="NCBIfam" id="NF002320">
    <property type="entry name" value="PRK01259.1"/>
    <property type="match status" value="1"/>
</dbReference>
<dbReference type="NCBIfam" id="NF002618">
    <property type="entry name" value="PRK02269.1"/>
    <property type="match status" value="1"/>
</dbReference>
<dbReference type="NCBIfam" id="TIGR01251">
    <property type="entry name" value="ribP_PPkin"/>
    <property type="match status" value="1"/>
</dbReference>
<dbReference type="PANTHER" id="PTHR10210">
    <property type="entry name" value="RIBOSE-PHOSPHATE DIPHOSPHOKINASE FAMILY MEMBER"/>
    <property type="match status" value="1"/>
</dbReference>
<dbReference type="PANTHER" id="PTHR10210:SF41">
    <property type="entry name" value="RIBOSE-PHOSPHATE PYROPHOSPHOKINASE 1, CHLOROPLASTIC"/>
    <property type="match status" value="1"/>
</dbReference>
<dbReference type="Pfam" id="PF14572">
    <property type="entry name" value="Pribosyl_synth"/>
    <property type="match status" value="1"/>
</dbReference>
<dbReference type="Pfam" id="PF13793">
    <property type="entry name" value="Pribosyltran_N"/>
    <property type="match status" value="1"/>
</dbReference>
<dbReference type="SMART" id="SM01400">
    <property type="entry name" value="Pribosyltran_N"/>
    <property type="match status" value="1"/>
</dbReference>
<dbReference type="SUPFAM" id="SSF53271">
    <property type="entry name" value="PRTase-like"/>
    <property type="match status" value="1"/>
</dbReference>
<dbReference type="PROSITE" id="PS00114">
    <property type="entry name" value="PRPP_SYNTHASE"/>
    <property type="match status" value="1"/>
</dbReference>
<gene>
    <name evidence="1" type="primary">prs</name>
    <name type="synonym">prs1</name>
</gene>
<protein>
    <recommendedName>
        <fullName evidence="1">Ribose-phosphate pyrophosphokinase</fullName>
        <shortName evidence="1">RPPK</shortName>
        <ecNumber evidence="1">2.7.6.1</ecNumber>
    </recommendedName>
    <alternativeName>
        <fullName evidence="1">5-phospho-D-ribosyl alpha-1-diphosphate synthase</fullName>
    </alternativeName>
    <alternativeName>
        <fullName evidence="1">Phosphoribosyl diphosphate synthase</fullName>
    </alternativeName>
    <alternativeName>
        <fullName evidence="1">Phosphoribosyl pyrophosphate synthase</fullName>
        <shortName evidence="1">P-Rib-PP synthase</shortName>
        <shortName evidence="1">PRPP synthase</shortName>
        <shortName evidence="1">PRPPase</shortName>
    </alternativeName>
</protein>
<evidence type="ECO:0000255" key="1">
    <source>
        <dbReference type="HAMAP-Rule" id="MF_00583"/>
    </source>
</evidence>
<proteinExistence type="inferred from homology"/>
<sequence>MSNEYFDPKLKIFSLNSNRELAEEIAKEVGIELGKSSVTHFSDGEIQINIEESIRGCHVYVIQSTSNPVNQNLMELLIMIDALKRASAATINIVMPYYGYARQDRKARSREPITAKLVANLIETAGATRMITLDMHAPQIQGFFDIPIDHLNAVRLLSNYFGERHLGDDLVVVSPDHGGVTRARKMADRLKAPIAIIDKRRPRPNVAEVMNIVGNVEGKVCIIIDDIIDTAGTITLAAKALREAGATKVYACCSHPVLSGPAMKRIEESPIEKLVVTNSIALPEDKWIDKMEQLSVAPLLGEAIVRVHENASVSSLFE</sequence>
<feature type="chain" id="PRO_0000141154" description="Ribose-phosphate pyrophosphokinase">
    <location>
        <begin position="1"/>
        <end position="318"/>
    </location>
</feature>
<feature type="active site" evidence="1">
    <location>
        <position position="199"/>
    </location>
</feature>
<feature type="binding site" evidence="1">
    <location>
        <begin position="43"/>
        <end position="45"/>
    </location>
    <ligand>
        <name>ATP</name>
        <dbReference type="ChEBI" id="CHEBI:30616"/>
    </ligand>
</feature>
<feature type="binding site" evidence="1">
    <location>
        <begin position="102"/>
        <end position="103"/>
    </location>
    <ligand>
        <name>ATP</name>
        <dbReference type="ChEBI" id="CHEBI:30616"/>
    </ligand>
</feature>
<feature type="binding site" evidence="1">
    <location>
        <position position="136"/>
    </location>
    <ligand>
        <name>Mg(2+)</name>
        <dbReference type="ChEBI" id="CHEBI:18420"/>
        <label>1</label>
    </ligand>
</feature>
<feature type="binding site" evidence="1">
    <location>
        <position position="176"/>
    </location>
    <ligand>
        <name>Mg(2+)</name>
        <dbReference type="ChEBI" id="CHEBI:18420"/>
        <label>2</label>
    </ligand>
</feature>
<feature type="binding site" evidence="1">
    <location>
        <position position="201"/>
    </location>
    <ligand>
        <name>D-ribose 5-phosphate</name>
        <dbReference type="ChEBI" id="CHEBI:78346"/>
    </ligand>
</feature>
<feature type="binding site" evidence="1">
    <location>
        <position position="225"/>
    </location>
    <ligand>
        <name>D-ribose 5-phosphate</name>
        <dbReference type="ChEBI" id="CHEBI:78346"/>
    </ligand>
</feature>
<feature type="binding site" evidence="1">
    <location>
        <begin position="229"/>
        <end position="233"/>
    </location>
    <ligand>
        <name>D-ribose 5-phosphate</name>
        <dbReference type="ChEBI" id="CHEBI:78346"/>
    </ligand>
</feature>
<feature type="sequence variant" description="In strain: FSLc2011.">
    <original>A</original>
    <variation>T</variation>
    <location>
        <position position="22"/>
    </location>
</feature>
<organism>
    <name type="scientific">Listeria ivanovii</name>
    <dbReference type="NCBI Taxonomy" id="1638"/>
    <lineage>
        <taxon>Bacteria</taxon>
        <taxon>Bacillati</taxon>
        <taxon>Bacillota</taxon>
        <taxon>Bacilli</taxon>
        <taxon>Bacillales</taxon>
        <taxon>Listeriaceae</taxon>
        <taxon>Listeria</taxon>
    </lineage>
</organism>
<reference key="1">
    <citation type="submission" date="2002-07" db="EMBL/GenBank/DDBJ databases">
        <title>Molecular evolution of Listeria spp. and Listeria monocytogenes.</title>
        <authorList>
            <person name="Cai S."/>
            <person name="Nielsen R."/>
            <person name="Roberts A.J."/>
            <person name="Wiedmann M."/>
        </authorList>
    </citation>
    <scope>NUCLEOTIDE SEQUENCE [GENOMIC DNA]</scope>
    <source>
        <strain>FSLc2010</strain>
        <strain>FSLc2011</strain>
    </source>
</reference>
<accession>Q83YI7</accession>
<accession>Q83YI8</accession>
<comment type="function">
    <text evidence="1">Involved in the biosynthesis of the central metabolite phospho-alpha-D-ribosyl-1-pyrophosphate (PRPP) via the transfer of pyrophosphoryl group from ATP to 1-hydroxyl of ribose-5-phosphate (Rib-5-P).</text>
</comment>
<comment type="catalytic activity">
    <reaction evidence="1">
        <text>D-ribose 5-phosphate + ATP = 5-phospho-alpha-D-ribose 1-diphosphate + AMP + H(+)</text>
        <dbReference type="Rhea" id="RHEA:15609"/>
        <dbReference type="ChEBI" id="CHEBI:15378"/>
        <dbReference type="ChEBI" id="CHEBI:30616"/>
        <dbReference type="ChEBI" id="CHEBI:58017"/>
        <dbReference type="ChEBI" id="CHEBI:78346"/>
        <dbReference type="ChEBI" id="CHEBI:456215"/>
        <dbReference type="EC" id="2.7.6.1"/>
    </reaction>
</comment>
<comment type="cofactor">
    <cofactor evidence="1">
        <name>Mg(2+)</name>
        <dbReference type="ChEBI" id="CHEBI:18420"/>
    </cofactor>
    <text evidence="1">Binds 2 Mg(2+) ions per subunit.</text>
</comment>
<comment type="pathway">
    <text evidence="1">Metabolic intermediate biosynthesis; 5-phospho-alpha-D-ribose 1-diphosphate biosynthesis; 5-phospho-alpha-D-ribose 1-diphosphate from D-ribose 5-phosphate (route I): step 1/1.</text>
</comment>
<comment type="subunit">
    <text evidence="1">Homohexamer.</text>
</comment>
<comment type="subcellular location">
    <subcellularLocation>
        <location evidence="1">Cytoplasm</location>
    </subcellularLocation>
</comment>
<comment type="similarity">
    <text evidence="1">Belongs to the ribose-phosphate pyrophosphokinase family. Class I subfamily.</text>
</comment>
<name>KPRS_LISIV</name>
<keyword id="KW-0067">ATP-binding</keyword>
<keyword id="KW-0963">Cytoplasm</keyword>
<keyword id="KW-0418">Kinase</keyword>
<keyword id="KW-0460">Magnesium</keyword>
<keyword id="KW-0479">Metal-binding</keyword>
<keyword id="KW-0545">Nucleotide biosynthesis</keyword>
<keyword id="KW-0547">Nucleotide-binding</keyword>
<keyword id="KW-0808">Transferase</keyword>